<protein>
    <recommendedName>
        <fullName>Trichothecene 3-O-acetyltransferase</fullName>
        <ecNumber>2.3.1.-</ecNumber>
    </recommendedName>
</protein>
<accession>Q12226</accession>
<accession>D6VXU6</accession>
<reference key="1">
    <citation type="submission" date="1995-01" db="EMBL/GenBank/DDBJ databases">
        <title>Sequence of a 37 kb DNA fragment from chromosome XII of Saccharomyces cerevisiae including the subtelomeric region of the left arm.</title>
        <authorList>
            <person name="Wedler H."/>
            <person name="Wambutt R."/>
        </authorList>
    </citation>
    <scope>NUCLEOTIDE SEQUENCE [GENOMIC DNA]</scope>
    <source>
        <strain>ATCC 204511 / S288c / AB972</strain>
    </source>
</reference>
<reference key="2">
    <citation type="journal article" date="1997" name="Nature">
        <title>The nucleotide sequence of Saccharomyces cerevisiae chromosome XII.</title>
        <authorList>
            <person name="Johnston M."/>
            <person name="Hillier L.W."/>
            <person name="Riles L."/>
            <person name="Albermann K."/>
            <person name="Andre B."/>
            <person name="Ansorge W."/>
            <person name="Benes V."/>
            <person name="Brueckner M."/>
            <person name="Delius H."/>
            <person name="Dubois E."/>
            <person name="Duesterhoeft A."/>
            <person name="Entian K.-D."/>
            <person name="Floeth M."/>
            <person name="Goffeau A."/>
            <person name="Hebling U."/>
            <person name="Heumann K."/>
            <person name="Heuss-Neitzel D."/>
            <person name="Hilbert H."/>
            <person name="Hilger F."/>
            <person name="Kleine K."/>
            <person name="Koetter P."/>
            <person name="Louis E.J."/>
            <person name="Messenguy F."/>
            <person name="Mewes H.-W."/>
            <person name="Miosga T."/>
            <person name="Moestl D."/>
            <person name="Mueller-Auer S."/>
            <person name="Nentwich U."/>
            <person name="Obermaier B."/>
            <person name="Piravandi E."/>
            <person name="Pohl T.M."/>
            <person name="Portetelle D."/>
            <person name="Purnelle B."/>
            <person name="Rechmann S."/>
            <person name="Rieger M."/>
            <person name="Rinke M."/>
            <person name="Rose M."/>
            <person name="Scharfe M."/>
            <person name="Scherens B."/>
            <person name="Scholler P."/>
            <person name="Schwager C."/>
            <person name="Schwarz S."/>
            <person name="Underwood A.P."/>
            <person name="Urrestarazu L.A."/>
            <person name="Vandenbol M."/>
            <person name="Verhasselt P."/>
            <person name="Vierendeels F."/>
            <person name="Voet M."/>
            <person name="Volckaert G."/>
            <person name="Voss H."/>
            <person name="Wambutt R."/>
            <person name="Wedler E."/>
            <person name="Wedler H."/>
            <person name="Zimmermann F.K."/>
            <person name="Zollner A."/>
            <person name="Hani J."/>
            <person name="Hoheisel J.D."/>
        </authorList>
    </citation>
    <scope>NUCLEOTIDE SEQUENCE [LARGE SCALE GENOMIC DNA]</scope>
    <source>
        <strain>ATCC 204508 / S288c</strain>
    </source>
</reference>
<reference key="3">
    <citation type="journal article" date="2014" name="G3 (Bethesda)">
        <title>The reference genome sequence of Saccharomyces cerevisiae: Then and now.</title>
        <authorList>
            <person name="Engel S.R."/>
            <person name="Dietrich F.S."/>
            <person name="Fisk D.G."/>
            <person name="Binkley G."/>
            <person name="Balakrishnan R."/>
            <person name="Costanzo M.C."/>
            <person name="Dwight S.S."/>
            <person name="Hitz B.C."/>
            <person name="Karra K."/>
            <person name="Nash R.S."/>
            <person name="Weng S."/>
            <person name="Wong E.D."/>
            <person name="Lloyd P."/>
            <person name="Skrzypek M.S."/>
            <person name="Miyasato S.R."/>
            <person name="Simison M."/>
            <person name="Cherry J.M."/>
        </authorList>
    </citation>
    <scope>GENOME REANNOTATION</scope>
    <source>
        <strain>ATCC 204508 / S288c</strain>
    </source>
</reference>
<reference key="4">
    <citation type="journal article" date="2002" name="Yeast">
        <title>The identification of the Saccharomyces cerevisiae gene AYT1(ORF-YLL063c) encoding an acetyltransferase.</title>
        <authorList>
            <person name="Alexander N.J."/>
            <person name="McCormick S.P."/>
            <person name="Hohn T.M."/>
        </authorList>
    </citation>
    <scope>FUNCTION</scope>
</reference>
<reference key="5">
    <citation type="journal article" date="2005" name="Microbiology">
        <title>Concordant evolution of trichothecene 3-O-acetyltransferase and an rDNA species phylogeny of trichothecene-producing and non-producing fusaria and other ascomycetous fungi.</title>
        <authorList>
            <person name="Tokai T."/>
            <person name="Fujimura M."/>
            <person name="Inoue H."/>
            <person name="Aoki T."/>
            <person name="Ohta K."/>
            <person name="Shibata T."/>
            <person name="Yamaguchi I."/>
            <person name="Kimura M."/>
        </authorList>
    </citation>
    <scope>FUNCTION</scope>
</reference>
<comment type="function">
    <text evidence="1 2">Trichothecene 3-O-acetyltransferase involved in self-protection against trichothecenes, mycotoxins acting as eukaryotic protein synthesis inhibitors. Its existence is surprising in a non-trichothecene producer organism which needs no self-protection again endogenic trichothecenes. The persistence of this non-essential gene may be due to a selective advantage that it may confer, like a resistance to exogenic trichothecenes.</text>
</comment>
<comment type="similarity">
    <text evidence="3">Belongs to the trichothecene 3-O-acetyltransferase family.</text>
</comment>
<feature type="chain" id="PRO_0000076181" description="Trichothecene 3-O-acetyltransferase">
    <location>
        <begin position="1"/>
        <end position="474"/>
    </location>
</feature>
<proteinExistence type="inferred from homology"/>
<keyword id="KW-0012">Acyltransferase</keyword>
<keyword id="KW-1185">Reference proteome</keyword>
<keyword id="KW-0808">Transferase</keyword>
<dbReference type="EC" id="2.3.1.-"/>
<dbReference type="EMBL" id="Z47973">
    <property type="protein sequence ID" value="CAA87994.1"/>
    <property type="molecule type" value="Genomic_DNA"/>
</dbReference>
<dbReference type="EMBL" id="Z73168">
    <property type="protein sequence ID" value="CAA97516.1"/>
    <property type="molecule type" value="Genomic_DNA"/>
</dbReference>
<dbReference type="EMBL" id="BK006945">
    <property type="protein sequence ID" value="DAA09262.1"/>
    <property type="molecule type" value="Genomic_DNA"/>
</dbReference>
<dbReference type="PIR" id="S50957">
    <property type="entry name" value="S50957"/>
</dbReference>
<dbReference type="RefSeq" id="NP_013037.1">
    <property type="nucleotide sequence ID" value="NM_001181883.1"/>
</dbReference>
<dbReference type="SMR" id="Q12226"/>
<dbReference type="BioGRID" id="31253">
    <property type="interactions" value="33"/>
</dbReference>
<dbReference type="FunCoup" id="Q12226">
    <property type="interactions" value="114"/>
</dbReference>
<dbReference type="IntAct" id="Q12226">
    <property type="interactions" value="1"/>
</dbReference>
<dbReference type="MINT" id="Q12226"/>
<dbReference type="STRING" id="4932.YLL063C"/>
<dbReference type="CarbonylDB" id="Q12226"/>
<dbReference type="PaxDb" id="4932-YLL063C"/>
<dbReference type="PeptideAtlas" id="Q12226"/>
<dbReference type="EnsemblFungi" id="YLL063C_mRNA">
    <property type="protein sequence ID" value="YLL063C"/>
    <property type="gene ID" value="YLL063C"/>
</dbReference>
<dbReference type="GeneID" id="850663"/>
<dbReference type="KEGG" id="sce:YLL063C"/>
<dbReference type="AGR" id="SGD:S000003986"/>
<dbReference type="SGD" id="S000003986">
    <property type="gene designation" value="AYT1"/>
</dbReference>
<dbReference type="VEuPathDB" id="FungiDB:YLL063C"/>
<dbReference type="eggNOG" id="ENOG502SHVS">
    <property type="taxonomic scope" value="Eukaryota"/>
</dbReference>
<dbReference type="HOGENOM" id="CLU_026450_5_0_1"/>
<dbReference type="InParanoid" id="Q12226"/>
<dbReference type="OMA" id="CLRDEDW"/>
<dbReference type="OrthoDB" id="1862401at2759"/>
<dbReference type="BioCyc" id="YEAST:YLL063C-MONOMER"/>
<dbReference type="BioGRID-ORCS" id="850663">
    <property type="hits" value="0 hits in 10 CRISPR screens"/>
</dbReference>
<dbReference type="PRO" id="PR:Q12226"/>
<dbReference type="Proteomes" id="UP000002311">
    <property type="component" value="Chromosome XII"/>
</dbReference>
<dbReference type="RNAct" id="Q12226">
    <property type="molecule type" value="protein"/>
</dbReference>
<dbReference type="GO" id="GO:0005737">
    <property type="term" value="C:cytoplasm"/>
    <property type="evidence" value="ECO:0000318"/>
    <property type="project" value="GO_Central"/>
</dbReference>
<dbReference type="GO" id="GO:0005777">
    <property type="term" value="C:peroxisome"/>
    <property type="evidence" value="ECO:0000314"/>
    <property type="project" value="SGD"/>
</dbReference>
<dbReference type="GO" id="GO:0016747">
    <property type="term" value="F:acyltransferase activity, transferring groups other than amino-acyl groups"/>
    <property type="evidence" value="ECO:0000318"/>
    <property type="project" value="GO_Central"/>
</dbReference>
<dbReference type="GO" id="GO:0045462">
    <property type="term" value="F:trichothecene 3-O-acetyltransferase activity"/>
    <property type="evidence" value="ECO:0000315"/>
    <property type="project" value="SGD"/>
</dbReference>
<dbReference type="GO" id="GO:0043387">
    <property type="term" value="P:mycotoxin catabolic process"/>
    <property type="evidence" value="ECO:0000315"/>
    <property type="project" value="SGD"/>
</dbReference>
<dbReference type="Gene3D" id="3.30.559.10">
    <property type="entry name" value="Chloramphenicol acetyltransferase-like domain"/>
    <property type="match status" value="2"/>
</dbReference>
<dbReference type="InterPro" id="IPR023213">
    <property type="entry name" value="CAT-like_dom_sf"/>
</dbReference>
<dbReference type="InterPro" id="IPR051283">
    <property type="entry name" value="Sec_Metabolite_Acyltrans"/>
</dbReference>
<dbReference type="InterPro" id="IPR054710">
    <property type="entry name" value="Tri101-like_N"/>
</dbReference>
<dbReference type="PANTHER" id="PTHR31896">
    <property type="entry name" value="FAMILY REGULATORY PROTEIN, PUTATIVE (AFU_ORTHOLOGUE AFUA_3G14730)-RELATED"/>
    <property type="match status" value="1"/>
</dbReference>
<dbReference type="PANTHER" id="PTHR31896:SF64">
    <property type="entry name" value="TRICHOTHECENE 3-O-ACETYLTRANSFERASE"/>
    <property type="match status" value="1"/>
</dbReference>
<dbReference type="Pfam" id="PF22664">
    <property type="entry name" value="TRI-like_N"/>
    <property type="match status" value="1"/>
</dbReference>
<organism>
    <name type="scientific">Saccharomyces cerevisiae (strain ATCC 204508 / S288c)</name>
    <name type="common">Baker's yeast</name>
    <dbReference type="NCBI Taxonomy" id="559292"/>
    <lineage>
        <taxon>Eukaryota</taxon>
        <taxon>Fungi</taxon>
        <taxon>Dikarya</taxon>
        <taxon>Ascomycota</taxon>
        <taxon>Saccharomycotina</taxon>
        <taxon>Saccharomycetes</taxon>
        <taxon>Saccharomycetales</taxon>
        <taxon>Saccharomycetaceae</taxon>
        <taxon>Saccharomyces</taxon>
    </lineage>
</organism>
<sequence length="474" mass="52837">MFRVKIISQKRTKSVQMLENDQLDILGQQPSLYKLYTQICSIYRVPDPSAHDHIVNTLTRGLETLAKNFQWLAGNVVNEGADEGNTGTYRIVPSDKIPLIVQDLREDLSAPTMDSLEKADFPIYMLDEKTFAPCMTINPPGNTIGMAAKSGPVFAVQANFISGGLVLTIVGQHNIMDITGQESIINLLNKSCHQKPFSDEELLIGNIDKSKSIPLFDETWEPDTTLVHEIVETSRNTSGEEKEQSCSSNSTWAYVEFSAISLQNLRILAMQTCTSGTKFVSTDDIVTAFIWKSVSRARLSRLKPETKSNLGRAVDVRKRLGLPETYPGLLVNMTFNTGSLKSLDHKSLGVLASQIRRKLDPKVFDLAYNTCALATLLSRCPDKTKVSIPQPIDTLSGIMVSSWAKVSLYDVDFNLGLGKPKSVRRPRFISLESLIYFMPRSSRGEMVVALCLRDKDWECLNADKEWTNYATHIG</sequence>
<evidence type="ECO:0000269" key="1">
    <source>
    </source>
</evidence>
<evidence type="ECO:0000269" key="2">
    <source>
    </source>
</evidence>
<evidence type="ECO:0000305" key="3"/>
<gene>
    <name type="primary">AYT1</name>
    <name type="ordered locus">YLL063C</name>
    <name type="ORF">L0549</name>
</gene>
<name>AYT1_YEAST</name>